<feature type="signal peptide" evidence="1">
    <location>
        <begin position="1"/>
        <end position="20"/>
    </location>
</feature>
<feature type="chain" id="PRO_0000418021" description="Peroxidase-like protein" evidence="1">
    <location>
        <begin position="21"/>
        <end position="793"/>
    </location>
</feature>
<name>PLSP_PINMG</name>
<organism>
    <name type="scientific">Margaritifera margaritifera</name>
    <name type="common">Freshwater pearl mussel</name>
    <dbReference type="NCBI Taxonomy" id="102329"/>
    <lineage>
        <taxon>Eukaryota</taxon>
        <taxon>Metazoa</taxon>
        <taxon>Spiralia</taxon>
        <taxon>Lophotrochozoa</taxon>
        <taxon>Mollusca</taxon>
        <taxon>Bivalvia</taxon>
        <taxon>Autobranchia</taxon>
        <taxon>Pteriomorphia</taxon>
        <taxon>Pterioida</taxon>
        <taxon>Pterioidea</taxon>
        <taxon>Pteriidae</taxon>
        <taxon>Pinctada</taxon>
    </lineage>
</organism>
<proteinExistence type="evidence at protein level"/>
<sequence>MNLFICHVFLLLLHGYLIICQDIPPDTIISAVNTAQQEVTQREASSFSQQQARASVAAFAGAPQPAAVLAASRPARTGLDRFNRRNDPQRNTELSIGGQVTQRATLALRSSDPASAAAPAARTLTPLDARAPAAGFSASSTMTFRNAAAQSCTDSRPVTVCDPQQRYRETDGQCNNLVFPSFPSGAFKLGAAFTAQGRFLFPAYDDGVSSPRIRSVIPGFLLPNARLVSRNVHSGTAFDSDRHTPFLTHFGQFIDHDIVSTPETEPKFTMPNSHCCLEPNLEECFNINFEPDPLLQGSCIRFNRADTAPSYFCNPGPRLQQNQRSSFVDGTMVYGWDVEQENRLREPGTGRLISEGDDQLKLEPVADPLNPPCFPVDNRCFEAGDHRSLETVPLTVMHIMFLRRHNLIVQELQNLPLPWTPELLFQEAKRIVVAELQHITYNEFLPRVLGPQFMTIFRLWPAPLFSDTYSPLVDPRTTSGFSVAAYRFGHSLVRNVHDQIGPGGLPVNNLLLQDHFDRLQTHLNVFPGGNTEGFARWMKLSQKSRADRTLVDGLQNNLFPCEDPDCPMGGGVTKSFDLAALNIQRGRDHGLPPYTAWRYWCTGRRAFVFTPNAVGLSDHSPFEANILSNTYRHVDDIDLFTGGMTEMRRPGALLGPTLSCIIGLQFSNYKRGDRFFYERPDPVMAFTPGQLQAIKETSLAKILCSTMRSFSNVQIBAMDRVSPSNPIVNCDELRSQDIIAKIPFLWNQLPNRAIQSAAARASNISGRTGLRVSTRFEDPAMLRLIGRRRLYKH</sequence>
<dbReference type="EMBL" id="HE610394">
    <property type="protein sequence ID" value="CCE46168.1"/>
    <property type="molecule type" value="mRNA"/>
</dbReference>
<dbReference type="GO" id="GO:0005576">
    <property type="term" value="C:extracellular region"/>
    <property type="evidence" value="ECO:0007669"/>
    <property type="project" value="UniProtKB-SubCell"/>
</dbReference>
<dbReference type="GO" id="GO:0020037">
    <property type="term" value="F:heme binding"/>
    <property type="evidence" value="ECO:0007669"/>
    <property type="project" value="InterPro"/>
</dbReference>
<dbReference type="GO" id="GO:0004601">
    <property type="term" value="F:peroxidase activity"/>
    <property type="evidence" value="ECO:0007669"/>
    <property type="project" value="InterPro"/>
</dbReference>
<dbReference type="GO" id="GO:0006979">
    <property type="term" value="P:response to oxidative stress"/>
    <property type="evidence" value="ECO:0007669"/>
    <property type="project" value="InterPro"/>
</dbReference>
<dbReference type="FunFam" id="1.10.640.10:FF:000003">
    <property type="entry name" value="chorion peroxidase"/>
    <property type="match status" value="1"/>
</dbReference>
<dbReference type="Gene3D" id="1.10.640.10">
    <property type="entry name" value="Haem peroxidase domain superfamily, animal type"/>
    <property type="match status" value="1"/>
</dbReference>
<dbReference type="InterPro" id="IPR019791">
    <property type="entry name" value="Haem_peroxidase_animal"/>
</dbReference>
<dbReference type="InterPro" id="IPR010255">
    <property type="entry name" value="Haem_peroxidase_sf"/>
</dbReference>
<dbReference type="InterPro" id="IPR037120">
    <property type="entry name" value="Haem_peroxidase_sf_animal"/>
</dbReference>
<dbReference type="PANTHER" id="PTHR11475:SF134">
    <property type="entry name" value="LD42267P"/>
    <property type="match status" value="1"/>
</dbReference>
<dbReference type="PANTHER" id="PTHR11475">
    <property type="entry name" value="OXIDASE/PEROXIDASE"/>
    <property type="match status" value="1"/>
</dbReference>
<dbReference type="Pfam" id="PF03098">
    <property type="entry name" value="An_peroxidase"/>
    <property type="match status" value="1"/>
</dbReference>
<dbReference type="PRINTS" id="PR00457">
    <property type="entry name" value="ANPEROXIDASE"/>
</dbReference>
<dbReference type="SUPFAM" id="SSF48113">
    <property type="entry name" value="Heme-dependent peroxidases"/>
    <property type="match status" value="1"/>
</dbReference>
<dbReference type="PROSITE" id="PS50292">
    <property type="entry name" value="PEROXIDASE_3"/>
    <property type="match status" value="1"/>
</dbReference>
<protein>
    <recommendedName>
        <fullName>Peroxidase-like protein</fullName>
    </recommendedName>
</protein>
<comment type="subcellular location">
    <subcellularLocation>
        <location evidence="3">Secreted</location>
    </subcellularLocation>
</comment>
<comment type="tissue specificity">
    <text evidence="3">Prismatic layer of shell (at protein level). Expressed primarily in the mantle with highest level in the mantle edge and lower level in the mantle pallium.</text>
</comment>
<comment type="similarity">
    <text evidence="2">Belongs to the peroxidase family.</text>
</comment>
<keyword id="KW-0903">Direct protein sequencing</keyword>
<keyword id="KW-0964">Secreted</keyword>
<keyword id="KW-0732">Signal</keyword>
<evidence type="ECO:0000255" key="1"/>
<evidence type="ECO:0000255" key="2">
    <source>
        <dbReference type="PROSITE-ProRule" id="PRU00298"/>
    </source>
</evidence>
<evidence type="ECO:0000269" key="3">
    <source>
    </source>
</evidence>
<evidence type="ECO:0000305" key="4"/>
<reference evidence="4" key="1">
    <citation type="journal article" date="2010" name="BMC Genomics">
        <title>Transcriptome and proteome analysis of Pinctada margaritifera calcifying mantle and shell: focus on biomineralization.</title>
        <authorList>
            <person name="Joubert C."/>
            <person name="Piquemal D."/>
            <person name="Marie B."/>
            <person name="Manchon L."/>
            <person name="Pierrat F."/>
            <person name="Zanella-Cleon I."/>
            <person name="Cochennec-Laureau N."/>
            <person name="Gueguen Y."/>
            <person name="Montagnani C."/>
        </authorList>
    </citation>
    <scope>NUCLEOTIDE SEQUENCE [MRNA]</scope>
    <scope>IDENTIFICATION</scope>
    <source>
        <tissue>Mantle</tissue>
    </source>
</reference>
<reference key="2">
    <citation type="journal article" date="2012" name="Proc. Natl. Acad. Sci. U.S.A.">
        <title>Different secretory repertoires control the biomineralization processes of prism and nacre deposition of the pearl oyster shell.</title>
        <authorList>
            <person name="Marie B."/>
            <person name="Joubert C."/>
            <person name="Tayale A."/>
            <person name="Zanella-Cleon I."/>
            <person name="Belliard C."/>
            <person name="Piquemal D."/>
            <person name="Cochennec-Laureau N."/>
            <person name="Marin F."/>
            <person name="Gueguen Y."/>
            <person name="Montagnani C."/>
        </authorList>
    </citation>
    <scope>PROTEIN SEQUENCE OF 431-447 AND 633-648</scope>
    <scope>SUBCELLULAR LOCATION</scope>
    <scope>TISSUE SPECIFICITY</scope>
    <source>
        <tissue>Shell</tissue>
    </source>
</reference>
<accession>H2A0M7</accession>